<keyword id="KW-0002">3D-structure</keyword>
<keyword id="KW-1204">Blood coagulation cascade activating toxin</keyword>
<keyword id="KW-0106">Calcium</keyword>
<keyword id="KW-0903">Direct protein sequencing</keyword>
<keyword id="KW-1015">Disulfide bond</keyword>
<keyword id="KW-0325">Glycoprotein</keyword>
<keyword id="KW-1199">Hemostasis impairing toxin</keyword>
<keyword id="KW-0378">Hydrolase</keyword>
<keyword id="KW-0479">Metal-binding</keyword>
<keyword id="KW-0482">Metalloprotease</keyword>
<keyword id="KW-0645">Protease</keyword>
<keyword id="KW-0655">Prothrombin activator</keyword>
<keyword id="KW-0964">Secreted</keyword>
<keyword id="KW-0732">Signal</keyword>
<keyword id="KW-0800">Toxin</keyword>
<keyword id="KW-0862">Zinc</keyword>
<keyword id="KW-0865">Zymogen</keyword>
<organism>
    <name type="scientific">Echis carinatus</name>
    <name type="common">Saw-scaled viper</name>
    <dbReference type="NCBI Taxonomy" id="40353"/>
    <lineage>
        <taxon>Eukaryota</taxon>
        <taxon>Metazoa</taxon>
        <taxon>Chordata</taxon>
        <taxon>Craniata</taxon>
        <taxon>Vertebrata</taxon>
        <taxon>Euteleostomi</taxon>
        <taxon>Lepidosauria</taxon>
        <taxon>Squamata</taxon>
        <taxon>Bifurcata</taxon>
        <taxon>Unidentata</taxon>
        <taxon>Episquamata</taxon>
        <taxon>Toxicofera</taxon>
        <taxon>Serpentes</taxon>
        <taxon>Colubroidea</taxon>
        <taxon>Viperidae</taxon>
        <taxon>Viperinae</taxon>
        <taxon>Echis</taxon>
    </lineage>
</organism>
<evidence type="ECO:0000255" key="1"/>
<evidence type="ECO:0000255" key="2">
    <source>
        <dbReference type="PROSITE-ProRule" id="PRU00068"/>
    </source>
</evidence>
<evidence type="ECO:0000255" key="3">
    <source>
        <dbReference type="PROSITE-ProRule" id="PRU00276"/>
    </source>
</evidence>
<evidence type="ECO:0000255" key="4">
    <source>
        <dbReference type="PROSITE-ProRule" id="PRU10095"/>
    </source>
</evidence>
<evidence type="ECO:0000269" key="5">
    <source>
    </source>
</evidence>
<evidence type="ECO:0000269" key="6">
    <source>
    </source>
</evidence>
<evidence type="ECO:0000269" key="7">
    <source>
    </source>
</evidence>
<evidence type="ECO:0000269" key="8">
    <source>
    </source>
</evidence>
<evidence type="ECO:0000303" key="9">
    <source>
    </source>
</evidence>
<evidence type="ECO:0000305" key="10"/>
<evidence type="ECO:0000305" key="11">
    <source>
    </source>
</evidence>
<evidence type="ECO:0000305" key="12">
    <source>
    </source>
</evidence>
<evidence type="ECO:0000312" key="13">
    <source>
        <dbReference type="EMBL" id="BAA06910.1"/>
    </source>
</evidence>
<evidence type="ECO:0000312" key="14">
    <source>
        <dbReference type="PDB" id="9CLP"/>
    </source>
</evidence>
<evidence type="ECO:0007744" key="15">
    <source>
        <dbReference type="PDB" id="9CLP"/>
    </source>
</evidence>
<evidence type="ECO:0007829" key="16">
    <source>
        <dbReference type="PDB" id="9CLP"/>
    </source>
</evidence>
<name>VM3E_ECHCA</name>
<dbReference type="EC" id="3.4.24.-"/>
<dbReference type="EMBL" id="D32212">
    <property type="protein sequence ID" value="BAA06910.1"/>
    <property type="molecule type" value="mRNA"/>
</dbReference>
<dbReference type="PIR" id="A55796">
    <property type="entry name" value="A55796"/>
</dbReference>
<dbReference type="PDB" id="9CLP">
    <property type="method" value="EM"/>
    <property type="resolution" value="3.43 A"/>
    <property type="chains" value="A=195-614"/>
</dbReference>
<dbReference type="PDBsum" id="9CLP"/>
<dbReference type="EMDB" id="EMD-45728"/>
<dbReference type="SMR" id="Q90495"/>
<dbReference type="MEROPS" id="M12.151"/>
<dbReference type="BRENDA" id="3.4.21.60">
    <property type="organism ID" value="2035"/>
</dbReference>
<dbReference type="GO" id="GO:0005576">
    <property type="term" value="C:extracellular region"/>
    <property type="evidence" value="ECO:0007669"/>
    <property type="project" value="UniProtKB-SubCell"/>
</dbReference>
<dbReference type="GO" id="GO:0005886">
    <property type="term" value="C:plasma membrane"/>
    <property type="evidence" value="ECO:0007669"/>
    <property type="project" value="TreeGrafter"/>
</dbReference>
<dbReference type="GO" id="GO:0046872">
    <property type="term" value="F:metal ion binding"/>
    <property type="evidence" value="ECO:0007669"/>
    <property type="project" value="UniProtKB-KW"/>
</dbReference>
<dbReference type="GO" id="GO:0004222">
    <property type="term" value="F:metalloendopeptidase activity"/>
    <property type="evidence" value="ECO:0007669"/>
    <property type="project" value="InterPro"/>
</dbReference>
<dbReference type="GO" id="GO:0016504">
    <property type="term" value="F:peptidase activator activity"/>
    <property type="evidence" value="ECO:0007669"/>
    <property type="project" value="UniProtKB-KW"/>
</dbReference>
<dbReference type="GO" id="GO:0090729">
    <property type="term" value="F:toxin activity"/>
    <property type="evidence" value="ECO:0007669"/>
    <property type="project" value="UniProtKB-KW"/>
</dbReference>
<dbReference type="GO" id="GO:0006508">
    <property type="term" value="P:proteolysis"/>
    <property type="evidence" value="ECO:0007669"/>
    <property type="project" value="UniProtKB-KW"/>
</dbReference>
<dbReference type="CDD" id="cd04269">
    <property type="entry name" value="ZnMc_adamalysin_II_like"/>
    <property type="match status" value="1"/>
</dbReference>
<dbReference type="FunFam" id="3.40.390.10:FF:000002">
    <property type="entry name" value="Disintegrin and metalloproteinase domain-containing protein 22"/>
    <property type="match status" value="1"/>
</dbReference>
<dbReference type="FunFam" id="4.10.70.10:FF:000001">
    <property type="entry name" value="Disintegrin and metalloproteinase domain-containing protein 22"/>
    <property type="match status" value="1"/>
</dbReference>
<dbReference type="Gene3D" id="3.40.390.10">
    <property type="entry name" value="Collagenase (Catalytic Domain)"/>
    <property type="match status" value="1"/>
</dbReference>
<dbReference type="Gene3D" id="4.10.70.10">
    <property type="entry name" value="Disintegrin domain"/>
    <property type="match status" value="1"/>
</dbReference>
<dbReference type="InterPro" id="IPR006586">
    <property type="entry name" value="ADAM_Cys-rich"/>
</dbReference>
<dbReference type="InterPro" id="IPR018358">
    <property type="entry name" value="Disintegrin_CS"/>
</dbReference>
<dbReference type="InterPro" id="IPR001762">
    <property type="entry name" value="Disintegrin_dom"/>
</dbReference>
<dbReference type="InterPro" id="IPR036436">
    <property type="entry name" value="Disintegrin_dom_sf"/>
</dbReference>
<dbReference type="InterPro" id="IPR024079">
    <property type="entry name" value="MetalloPept_cat_dom_sf"/>
</dbReference>
<dbReference type="InterPro" id="IPR001590">
    <property type="entry name" value="Peptidase_M12B"/>
</dbReference>
<dbReference type="InterPro" id="IPR002870">
    <property type="entry name" value="Peptidase_M12B_N"/>
</dbReference>
<dbReference type="InterPro" id="IPR034027">
    <property type="entry name" value="Reprolysin_adamalysin"/>
</dbReference>
<dbReference type="PANTHER" id="PTHR11905">
    <property type="entry name" value="ADAM A DISINTEGRIN AND METALLOPROTEASE DOMAIN"/>
    <property type="match status" value="1"/>
</dbReference>
<dbReference type="PANTHER" id="PTHR11905:SF32">
    <property type="entry name" value="DISINTEGRIN AND METALLOPROTEINASE DOMAIN-CONTAINING PROTEIN 28"/>
    <property type="match status" value="1"/>
</dbReference>
<dbReference type="Pfam" id="PF08516">
    <property type="entry name" value="ADAM_CR"/>
    <property type="match status" value="1"/>
</dbReference>
<dbReference type="Pfam" id="PF00200">
    <property type="entry name" value="Disintegrin"/>
    <property type="match status" value="1"/>
</dbReference>
<dbReference type="Pfam" id="PF01562">
    <property type="entry name" value="Pep_M12B_propep"/>
    <property type="match status" value="1"/>
</dbReference>
<dbReference type="Pfam" id="PF01421">
    <property type="entry name" value="Reprolysin"/>
    <property type="match status" value="1"/>
</dbReference>
<dbReference type="PRINTS" id="PR00289">
    <property type="entry name" value="DISINTEGRIN"/>
</dbReference>
<dbReference type="SMART" id="SM00608">
    <property type="entry name" value="ACR"/>
    <property type="match status" value="1"/>
</dbReference>
<dbReference type="SMART" id="SM00050">
    <property type="entry name" value="DISIN"/>
    <property type="match status" value="1"/>
</dbReference>
<dbReference type="SUPFAM" id="SSF57552">
    <property type="entry name" value="Blood coagulation inhibitor (disintegrin)"/>
    <property type="match status" value="1"/>
</dbReference>
<dbReference type="SUPFAM" id="SSF55486">
    <property type="entry name" value="Metalloproteases ('zincins'), catalytic domain"/>
    <property type="match status" value="1"/>
</dbReference>
<dbReference type="PROSITE" id="PS50215">
    <property type="entry name" value="ADAM_MEPRO"/>
    <property type="match status" value="1"/>
</dbReference>
<dbReference type="PROSITE" id="PS00427">
    <property type="entry name" value="DISINTEGRIN_1"/>
    <property type="match status" value="1"/>
</dbReference>
<dbReference type="PROSITE" id="PS50214">
    <property type="entry name" value="DISINTEGRIN_2"/>
    <property type="match status" value="1"/>
</dbReference>
<dbReference type="PROSITE" id="PS00142">
    <property type="entry name" value="ZINC_PROTEASE"/>
    <property type="match status" value="1"/>
</dbReference>
<feature type="signal peptide" evidence="1">
    <location>
        <begin position="1"/>
        <end position="20"/>
    </location>
</feature>
<feature type="propeptide" id="PRO_0000029027" evidence="12">
    <location>
        <begin position="21"/>
        <end position="190"/>
    </location>
</feature>
<feature type="chain" id="PRO_0000029028" description="Zinc metalloproteinase-disintegrin-like ecarin" evidence="12">
    <location>
        <begin position="191"/>
        <end position="616"/>
    </location>
</feature>
<feature type="domain" description="Peptidase M12B" evidence="3">
    <location>
        <begin position="201"/>
        <end position="397"/>
    </location>
</feature>
<feature type="domain" description="Disintegrin" evidence="2">
    <location>
        <begin position="405"/>
        <end position="491"/>
    </location>
</feature>
<feature type="short sequence motif" description="D/ECD-tripeptide">
    <location>
        <begin position="469"/>
        <end position="471"/>
    </location>
</feature>
<feature type="active site" evidence="3 4">
    <location>
        <position position="338"/>
    </location>
</feature>
<feature type="binding site" evidence="6 15">
    <location>
        <position position="204"/>
    </location>
    <ligand>
        <name>Ca(2+)</name>
        <dbReference type="ChEBI" id="CHEBI:29108"/>
        <label>1</label>
    </ligand>
</feature>
<feature type="binding site" evidence="6 15">
    <location>
        <position position="288"/>
    </location>
    <ligand>
        <name>Ca(2+)</name>
        <dbReference type="ChEBI" id="CHEBI:29108"/>
        <label>1</label>
    </ligand>
</feature>
<feature type="binding site" evidence="6 15">
    <location>
        <position position="337"/>
    </location>
    <ligand>
        <name>Zn(2+)</name>
        <dbReference type="ChEBI" id="CHEBI:29105"/>
        <note>catalytic</note>
    </ligand>
</feature>
<feature type="binding site" evidence="6 15">
    <location>
        <position position="341"/>
    </location>
    <ligand>
        <name>Zn(2+)</name>
        <dbReference type="ChEBI" id="CHEBI:29105"/>
        <note>catalytic</note>
    </ligand>
</feature>
<feature type="binding site" evidence="6 15">
    <location>
        <position position="347"/>
    </location>
    <ligand>
        <name>Zn(2+)</name>
        <dbReference type="ChEBI" id="CHEBI:29105"/>
        <note>catalytic</note>
    </ligand>
</feature>
<feature type="binding site" evidence="6 15">
    <location>
        <position position="392"/>
    </location>
    <ligand>
        <name>Ca(2+)</name>
        <dbReference type="ChEBI" id="CHEBI:29108"/>
        <label>1</label>
    </ligand>
</feature>
<feature type="binding site" evidence="6 15">
    <location>
        <position position="407"/>
    </location>
    <ligand>
        <name>Ca(2+)</name>
        <dbReference type="ChEBI" id="CHEBI:29108"/>
        <label>2</label>
    </ligand>
</feature>
<feature type="binding site" evidence="6 15">
    <location>
        <position position="410"/>
    </location>
    <ligand>
        <name>Ca(2+)</name>
        <dbReference type="ChEBI" id="CHEBI:29108"/>
        <label>2</label>
    </ligand>
</feature>
<feature type="binding site" evidence="6 15">
    <location>
        <position position="412"/>
    </location>
    <ligand>
        <name>Ca(2+)</name>
        <dbReference type="ChEBI" id="CHEBI:29108"/>
        <label>2</label>
    </ligand>
</feature>
<feature type="binding site" evidence="6 15">
    <location>
        <position position="414"/>
    </location>
    <ligand>
        <name>Ca(2+)</name>
        <dbReference type="ChEBI" id="CHEBI:29108"/>
        <label>2</label>
    </ligand>
</feature>
<feature type="binding site" evidence="6 15">
    <location>
        <position position="417"/>
    </location>
    <ligand>
        <name>Ca(2+)</name>
        <dbReference type="ChEBI" id="CHEBI:29108"/>
        <label>2</label>
    </ligand>
</feature>
<feature type="binding site" evidence="6 15">
    <location>
        <position position="420"/>
    </location>
    <ligand>
        <name>Ca(2+)</name>
        <dbReference type="ChEBI" id="CHEBI:29108"/>
        <label>2</label>
    </ligand>
</feature>
<feature type="binding site" evidence="6 15">
    <location>
        <position position="471"/>
    </location>
    <ligand>
        <name>Ca(2+)</name>
        <dbReference type="ChEBI" id="CHEBI:29108"/>
        <label>3</label>
    </ligand>
</feature>
<feature type="binding site" evidence="6 15">
    <location>
        <position position="472"/>
    </location>
    <ligand>
        <name>Ca(2+)</name>
        <dbReference type="ChEBI" id="CHEBI:29108"/>
        <label>3</label>
    </ligand>
</feature>
<feature type="binding site" evidence="6 15">
    <location>
        <position position="486"/>
    </location>
    <ligand>
        <name>Ca(2+)</name>
        <dbReference type="ChEBI" id="CHEBI:29108"/>
        <label>3</label>
    </ligand>
</feature>
<feature type="glycosylation site" description="N-linked (GlcNAc...) asparagine" evidence="1">
    <location>
        <position position="219"/>
    </location>
</feature>
<feature type="glycosylation site" description="N-linked (GlcNAc...) asparagine" evidence="1">
    <location>
        <position position="261"/>
    </location>
</feature>
<feature type="glycosylation site" description="N-linked (GlcNAc...) asparagine" evidence="1">
    <location>
        <position position="295"/>
    </location>
</feature>
<feature type="glycosylation site" description="N-linked (GlcNAc...) asparagine" evidence="1">
    <location>
        <position position="326"/>
    </location>
</feature>
<feature type="glycosylation site" description="N-linked (GlcNAc...) asparagine" evidence="1">
    <location>
        <position position="497"/>
    </location>
</feature>
<feature type="disulfide bond" evidence="6 15">
    <location>
        <begin position="312"/>
        <end position="392"/>
    </location>
</feature>
<feature type="disulfide bond" evidence="6 15">
    <location>
        <begin position="352"/>
        <end position="376"/>
    </location>
</feature>
<feature type="disulfide bond" evidence="6 15">
    <location>
        <begin position="354"/>
        <end position="359"/>
    </location>
</feature>
<feature type="disulfide bond" evidence="6 15">
    <location>
        <begin position="408"/>
        <end position="437"/>
    </location>
</feature>
<feature type="disulfide bond" evidence="6 15">
    <location>
        <begin position="419"/>
        <end position="432"/>
    </location>
</feature>
<feature type="disulfide bond" evidence="6 15">
    <location>
        <begin position="421"/>
        <end position="427"/>
    </location>
</feature>
<feature type="disulfide bond" evidence="6 15">
    <location>
        <begin position="431"/>
        <end position="454"/>
    </location>
</feature>
<feature type="disulfide bond" evidence="6 15">
    <location>
        <begin position="445"/>
        <end position="451"/>
    </location>
</feature>
<feature type="disulfide bond" evidence="6 15">
    <location>
        <begin position="450"/>
        <end position="476"/>
    </location>
</feature>
<feature type="disulfide bond" evidence="6 15">
    <location>
        <begin position="463"/>
        <end position="483"/>
    </location>
</feature>
<feature type="disulfide bond" evidence="6 15">
    <location>
        <begin position="470"/>
        <end position="502"/>
    </location>
</feature>
<feature type="disulfide bond" evidence="6 15">
    <location>
        <begin position="495"/>
        <end position="507"/>
    </location>
</feature>
<feature type="disulfide bond" evidence="6 15">
    <location>
        <begin position="514"/>
        <end position="567"/>
    </location>
</feature>
<feature type="disulfide bond" evidence="6 15">
    <location>
        <begin position="529"/>
        <end position="578"/>
    </location>
</feature>
<feature type="disulfide bond" evidence="6 15">
    <location>
        <begin position="542"/>
        <end position="555"/>
    </location>
</feature>
<feature type="disulfide bond" evidence="6 15">
    <location>
        <begin position="562"/>
        <end position="604"/>
    </location>
</feature>
<feature type="disulfide bond" evidence="6 15">
    <location>
        <begin position="598"/>
        <end position="609"/>
    </location>
</feature>
<feature type="strand" evidence="16">
    <location>
        <begin position="201"/>
        <end position="209"/>
    </location>
</feature>
<feature type="helix" evidence="16">
    <location>
        <begin position="211"/>
        <end position="216"/>
    </location>
</feature>
<feature type="turn" evidence="16">
    <location>
        <begin position="217"/>
        <end position="219"/>
    </location>
</feature>
<feature type="helix" evidence="16">
    <location>
        <begin position="221"/>
        <end position="238"/>
    </location>
</feature>
<feature type="helix" evidence="16">
    <location>
        <begin position="240"/>
        <end position="242"/>
    </location>
</feature>
<feature type="strand" evidence="16">
    <location>
        <begin position="244"/>
        <end position="253"/>
    </location>
</feature>
<feature type="helix" evidence="16">
    <location>
        <begin position="266"/>
        <end position="284"/>
    </location>
</feature>
<feature type="strand" evidence="16">
    <location>
        <begin position="288"/>
        <end position="294"/>
    </location>
</feature>
<feature type="helix" evidence="16">
    <location>
        <begin position="299"/>
        <end position="301"/>
    </location>
</feature>
<feature type="strand" evidence="16">
    <location>
        <begin position="304"/>
        <end position="306"/>
    </location>
</feature>
<feature type="turn" evidence="16">
    <location>
        <begin position="314"/>
        <end position="316"/>
    </location>
</feature>
<feature type="strand" evidence="16">
    <location>
        <begin position="319"/>
        <end position="322"/>
    </location>
</feature>
<feature type="helix" evidence="16">
    <location>
        <begin position="328"/>
        <end position="342"/>
    </location>
</feature>
<feature type="helix" evidence="16">
    <location>
        <begin position="360"/>
        <end position="362"/>
    </location>
</feature>
<feature type="helix" evidence="16">
    <location>
        <begin position="375"/>
        <end position="388"/>
    </location>
</feature>
<feature type="helix" evidence="16">
    <location>
        <begin position="391"/>
        <end position="393"/>
    </location>
</feature>
<feature type="turn" evidence="16">
    <location>
        <begin position="399"/>
        <end position="401"/>
    </location>
</feature>
<feature type="turn" evidence="16">
    <location>
        <begin position="424"/>
        <end position="426"/>
    </location>
</feature>
<feature type="turn" evidence="16">
    <location>
        <begin position="434"/>
        <end position="437"/>
    </location>
</feature>
<feature type="strand" evidence="16">
    <location>
        <begin position="462"/>
        <end position="464"/>
    </location>
</feature>
<feature type="strand" evidence="16">
    <location>
        <begin position="468"/>
        <end position="470"/>
    </location>
</feature>
<feature type="turn" evidence="16">
    <location>
        <begin position="496"/>
        <end position="499"/>
    </location>
</feature>
<feature type="helix" evidence="16">
    <location>
        <begin position="510"/>
        <end position="517"/>
    </location>
</feature>
<feature type="helix" evidence="16">
    <location>
        <begin position="529"/>
        <end position="534"/>
    </location>
</feature>
<feature type="strand" evidence="16">
    <location>
        <begin position="546"/>
        <end position="549"/>
    </location>
</feature>
<feature type="helix" evidence="16">
    <location>
        <begin position="560"/>
        <end position="562"/>
    </location>
</feature>
<feature type="strand" evidence="16">
    <location>
        <begin position="577"/>
        <end position="579"/>
    </location>
</feature>
<feature type="strand" evidence="16">
    <location>
        <begin position="584"/>
        <end position="586"/>
    </location>
</feature>
<feature type="turn" evidence="16">
    <location>
        <begin position="587"/>
        <end position="590"/>
    </location>
</feature>
<feature type="strand" evidence="16">
    <location>
        <begin position="602"/>
        <end position="605"/>
    </location>
</feature>
<feature type="strand" evidence="16">
    <location>
        <begin position="608"/>
        <end position="611"/>
    </location>
</feature>
<reference evidence="13" key="1">
    <citation type="journal article" date="1995" name="Biochemistry">
        <title>cDNA cloning and deduced amino acid sequence of prothrombin activator (ecarin) from Kenyan Echis carinatus venom.</title>
        <authorList>
            <person name="Nishida S."/>
            <person name="Fujita T."/>
            <person name="Kohno N."/>
            <person name="Atoda H."/>
            <person name="Morita T."/>
            <person name="Takeya H."/>
            <person name="Kido I."/>
            <person name="Paine M.J.I."/>
            <person name="Kawabata S."/>
            <person name="Iwanaga S."/>
        </authorList>
    </citation>
    <scope>NUCLEOTIDE SEQUENCE [MRNA]</scope>
    <scope>PROTEIN SEQUENCE OF 191-228; 353-357; 372-383; 393-415; 446-453; 459-474; 553-561; 574-597 AND 610-616</scope>
    <scope>SUBCELLULAR LOCATION</scope>
    <source>
        <tissue>Venom</tissue>
        <tissue>Venom gland</tissue>
    </source>
</reference>
<reference key="2">
    <citation type="journal article" date="1976" name="J. Biochem.">
        <title>The mechanism of activation of bovine prothrombin by an activator isolated from Echis carinatus venom and characterization of the new active intermediates.</title>
        <authorList>
            <person name="Morita T."/>
            <person name="Iwanaga S."/>
            <person name="Suzuki T."/>
        </authorList>
    </citation>
    <scope>FUNCTION</scope>
    <source>
        <tissue>Venom</tissue>
    </source>
</reference>
<reference key="3">
    <citation type="journal article" date="2022" name="Adv. Healthc. Mater.">
        <title>Snake venom hydrogels as a rapid hemostatic agent for uncontrolled bleeding.</title>
        <authorList>
            <person name="Yegappan R."/>
            <person name="Lauko J."/>
            <person name="Wang Z."/>
            <person name="Lavin M.F."/>
            <person name="Kijas A.W."/>
            <person name="Rowan A.E."/>
        </authorList>
    </citation>
    <scope>BIOTECHNOLOGY</scope>
</reference>
<reference key="4">
    <citation type="journal article" date="2005" name="Toxicon">
        <title>The intriguing world of prothrombin activators from snake venom.</title>
        <authorList>
            <person name="Kini R.M."/>
        </authorList>
    </citation>
    <scope>REVIEW</scope>
</reference>
<reference evidence="14" key="5">
    <citation type="journal article" date="2024" name="Toxins">
        <title>Importance of the cysteine-rich domain of snake venom prothrombin activators: insights gained from synthetic neutralizing antibodies.</title>
        <authorList>
            <person name="Misson Mindrebo L.E."/>
            <person name="Mindrebo J.T."/>
            <person name="Tran Q."/>
            <person name="Wilkinson M.C."/>
            <person name="Smith J.M."/>
            <person name="Verma M."/>
            <person name="Casewell N.R."/>
            <person name="Lander G.C."/>
            <person name="Jardine J.G."/>
        </authorList>
    </citation>
    <scope>STRUCTURE BY ELECTRON MICROSCOPY (3.43 ANGSTROMS) OF 195-614 IN COMPLEX WITH ZINC AND CALCIUM IONS AND NEUTRALIZING ANTIBODY</scope>
    <scope>FUNCTION</scope>
    <scope>COFACTOR</scope>
    <scope>DISULFIDE BONDS</scope>
    <scope>RECOMBINANT EXPRESSION</scope>
    <scope>BIOPHYSICOCHEMICAL PROPERTIES</scope>
    <scope>SUBUNIT</scope>
</reference>
<protein>
    <recommendedName>
        <fullName evidence="9">Zinc metalloproteinase-disintegrin-like ecarin</fullName>
        <ecNumber>3.4.24.-</ecNumber>
    </recommendedName>
    <alternativeName>
        <fullName>Snake venom metalloproteinase</fullName>
        <shortName>SVMP</shortName>
    </alternativeName>
</protein>
<accession>Q90495</accession>
<comment type="function">
    <text evidence="6 8">Snake venom zinc metalloproteinase that catalyzes the conversion of prothrombin (F2) to alpha-thrombin through formation of a thrombin intermediate, thereby functioning as a procoagulant protein (PubMed:39195771, PubMed:956136). Has a low Km for prothrombin and a high kcat (PubMed:39195771, PubMed:956136). Cleaves the 320-Arg-Ile-321 bond in prothrombin and produces meizothrombin which is ultimately converted to alpha-thrombin by autolysis (PubMed:956136).</text>
</comment>
<comment type="cofactor">
    <cofactor evidence="6">
        <name>Zn(2+)</name>
        <dbReference type="ChEBI" id="CHEBI:29105"/>
    </cofactor>
    <text evidence="6">Binds 1 zinc ion per subunit.</text>
</comment>
<comment type="biophysicochemical properties">
    <kinetics>
        <KM evidence="6">4.4 uM for prothrombin</KM>
        <text evidence="6">At pH 7.4 and 37 degrees Celsius.</text>
    </kinetics>
</comment>
<comment type="subunit">
    <text evidence="7">Monomer.</text>
</comment>
<comment type="subcellular location">
    <subcellularLocation>
        <location evidence="7">Secreted</location>
    </subcellularLocation>
</comment>
<comment type="tissue specificity">
    <text evidence="12">Expressed by the venom gland.</text>
</comment>
<comment type="biotechnology">
    <text evidence="11">Could be used in a hydrogel with the antifibrinolytic venom protein textilinin-1 (AC Q90WA1) to greatly reduce bleeding.</text>
</comment>
<comment type="miscellaneous">
    <text evidence="5">Negative results: does not inhibit platelet aggregation and does not promote hemorrhage.</text>
</comment>
<comment type="similarity">
    <text evidence="10">Belongs to the venom metalloproteinase (M12B) family. P-III subfamily. P-IIIa sub-subfamily.</text>
</comment>
<proteinExistence type="evidence at protein level"/>
<sequence>MIQILLVIICLAVFPYQGCSIILGSGNVNDYEVVYPQKVTALPKGAVQQPEQKYEDAMQYEFEVKGEPVVLHLEKNKELFSEDYSETHYSSDDREITTNPSVEDHCYYHGRIQNDAESTASISACNGLKGHFKLRGETYFIEPLKIPDSEAHAVYKYENIENEDEAPKMCGVTQDNWESDEPIKKTLGLIVPPHERKFEKKFIELVVVVDHSMVTKYNNDSTAIRTWIYEMLNTVNEIYLPFNIRVALVGLEFWCNGDLINVTSTADDTLHSFGEWRASDLLNRKRHDHAQLLTNVTLDHSTLGITFVYGMCKSDRSVELILDYSNITFNMAYIIAHEMGHSLGMLHDTKFCTCGAKPCIMFGKESIPPPKEFSSCSYDQYNKYLLKYNPKCILDPPLRKDIASPAVCGNEIWEEGEECDCGSPADCRNPCCDAATCKLKPGAECGNGECCDKCKIRKAGTECRPARDDCDVAEHCTGQSAECPRNEFQRNGQPCLNNSGYCYNGDCPIMLNQCIALFSPSATVAQDSCFQRNLQGSYYGYCTKEIGYYGKRFPCAPQDVKCGRLYCLDNSFKKNMRCKNDYSYADENKGIVEPGTKCEDGKVCINRKCVDVNTAY</sequence>